<reference key="1">
    <citation type="journal article" date="2005" name="Proc. Natl. Acad. Sci. U.S.A.">
        <title>Genome analysis of multiple pathogenic isolates of Streptococcus agalactiae: implications for the microbial 'pan-genome'.</title>
        <authorList>
            <person name="Tettelin H."/>
            <person name="Masignani V."/>
            <person name="Cieslewicz M.J."/>
            <person name="Donati C."/>
            <person name="Medini D."/>
            <person name="Ward N.L."/>
            <person name="Angiuoli S.V."/>
            <person name="Crabtree J."/>
            <person name="Jones A.L."/>
            <person name="Durkin A.S."/>
            <person name="DeBoy R.T."/>
            <person name="Davidsen T.M."/>
            <person name="Mora M."/>
            <person name="Scarselli M."/>
            <person name="Margarit y Ros I."/>
            <person name="Peterson J.D."/>
            <person name="Hauser C.R."/>
            <person name="Sundaram J.P."/>
            <person name="Nelson W.C."/>
            <person name="Madupu R."/>
            <person name="Brinkac L.M."/>
            <person name="Dodson R.J."/>
            <person name="Rosovitz M.J."/>
            <person name="Sullivan S.A."/>
            <person name="Daugherty S.C."/>
            <person name="Haft D.H."/>
            <person name="Selengut J."/>
            <person name="Gwinn M.L."/>
            <person name="Zhou L."/>
            <person name="Zafar N."/>
            <person name="Khouri H."/>
            <person name="Radune D."/>
            <person name="Dimitrov G."/>
            <person name="Watkins K."/>
            <person name="O'Connor K.J."/>
            <person name="Smith S."/>
            <person name="Utterback T.R."/>
            <person name="White O."/>
            <person name="Rubens C.E."/>
            <person name="Grandi G."/>
            <person name="Madoff L.C."/>
            <person name="Kasper D.L."/>
            <person name="Telford J.L."/>
            <person name="Wessels M.R."/>
            <person name="Rappuoli R."/>
            <person name="Fraser C.M."/>
        </authorList>
    </citation>
    <scope>NUCLEOTIDE SEQUENCE [LARGE SCALE GENOMIC DNA]</scope>
    <source>
        <strain>ATCC 27591 / A909 / CDC SS700</strain>
    </source>
</reference>
<sequence>MYLEQLKEVNPLTICITNNVVKNFTANGLLALGASPAMSECIEDLEDLLKVADALLINIGTLTKESWQLYQEAIKIANKNQVPVVLDPVAAGASRFRLEVSLDLLKNYSISLLRGNGSEIAALIGEKQASKGADGGKVADLESIAVKANQVFDVPVVVTGETDAIAVRGEVRLLQNGSPLMPLVTGTGCLLGAVLAAFIGSSDRSDDLACLTEAMTVYNVAGEIAEKVAKGKGVGSFQVAFLDALSQMKSEMIMDK</sequence>
<keyword id="KW-0067">ATP-binding</keyword>
<keyword id="KW-0418">Kinase</keyword>
<keyword id="KW-0460">Magnesium</keyword>
<keyword id="KW-0479">Metal-binding</keyword>
<keyword id="KW-0547">Nucleotide-binding</keyword>
<keyword id="KW-0784">Thiamine biosynthesis</keyword>
<keyword id="KW-0808">Transferase</keyword>
<organism>
    <name type="scientific">Streptococcus agalactiae serotype Ia (strain ATCC 27591 / A909 / CDC SS700)</name>
    <dbReference type="NCBI Taxonomy" id="205921"/>
    <lineage>
        <taxon>Bacteria</taxon>
        <taxon>Bacillati</taxon>
        <taxon>Bacillota</taxon>
        <taxon>Bacilli</taxon>
        <taxon>Lactobacillales</taxon>
        <taxon>Streptococcaceae</taxon>
        <taxon>Streptococcus</taxon>
    </lineage>
</organism>
<accession>Q3K1L7</accession>
<dbReference type="EC" id="2.7.1.50" evidence="1"/>
<dbReference type="EMBL" id="CP000114">
    <property type="protein sequence ID" value="ABA45778.1"/>
    <property type="molecule type" value="Genomic_DNA"/>
</dbReference>
<dbReference type="RefSeq" id="WP_000280417.1">
    <property type="nucleotide sequence ID" value="NC_007432.1"/>
</dbReference>
<dbReference type="SMR" id="Q3K1L7"/>
<dbReference type="KEGG" id="sak:SAK_0964"/>
<dbReference type="HOGENOM" id="CLU_019943_0_2_9"/>
<dbReference type="UniPathway" id="UPA00060">
    <property type="reaction ID" value="UER00139"/>
</dbReference>
<dbReference type="GO" id="GO:0005524">
    <property type="term" value="F:ATP binding"/>
    <property type="evidence" value="ECO:0007669"/>
    <property type="project" value="UniProtKB-UniRule"/>
</dbReference>
<dbReference type="GO" id="GO:0004417">
    <property type="term" value="F:hydroxyethylthiazole kinase activity"/>
    <property type="evidence" value="ECO:0007669"/>
    <property type="project" value="UniProtKB-UniRule"/>
</dbReference>
<dbReference type="GO" id="GO:0000287">
    <property type="term" value="F:magnesium ion binding"/>
    <property type="evidence" value="ECO:0007669"/>
    <property type="project" value="UniProtKB-UniRule"/>
</dbReference>
<dbReference type="GO" id="GO:0009228">
    <property type="term" value="P:thiamine biosynthetic process"/>
    <property type="evidence" value="ECO:0007669"/>
    <property type="project" value="UniProtKB-KW"/>
</dbReference>
<dbReference type="GO" id="GO:0009229">
    <property type="term" value="P:thiamine diphosphate biosynthetic process"/>
    <property type="evidence" value="ECO:0007669"/>
    <property type="project" value="UniProtKB-UniRule"/>
</dbReference>
<dbReference type="CDD" id="cd01170">
    <property type="entry name" value="THZ_kinase"/>
    <property type="match status" value="1"/>
</dbReference>
<dbReference type="Gene3D" id="3.40.1190.20">
    <property type="match status" value="1"/>
</dbReference>
<dbReference type="HAMAP" id="MF_00228">
    <property type="entry name" value="Thz_kinase"/>
    <property type="match status" value="1"/>
</dbReference>
<dbReference type="InterPro" id="IPR000417">
    <property type="entry name" value="Hyethyz_kinase"/>
</dbReference>
<dbReference type="InterPro" id="IPR029056">
    <property type="entry name" value="Ribokinase-like"/>
</dbReference>
<dbReference type="NCBIfam" id="NF006830">
    <property type="entry name" value="PRK09355.1"/>
    <property type="match status" value="1"/>
</dbReference>
<dbReference type="NCBIfam" id="TIGR00694">
    <property type="entry name" value="thiM"/>
    <property type="match status" value="1"/>
</dbReference>
<dbReference type="Pfam" id="PF02110">
    <property type="entry name" value="HK"/>
    <property type="match status" value="1"/>
</dbReference>
<dbReference type="PIRSF" id="PIRSF000513">
    <property type="entry name" value="Thz_kinase"/>
    <property type="match status" value="1"/>
</dbReference>
<dbReference type="PRINTS" id="PR01099">
    <property type="entry name" value="HYETHTZKNASE"/>
</dbReference>
<dbReference type="SUPFAM" id="SSF53613">
    <property type="entry name" value="Ribokinase-like"/>
    <property type="match status" value="1"/>
</dbReference>
<proteinExistence type="inferred from homology"/>
<gene>
    <name evidence="1" type="primary">thiM</name>
    <name type="ordered locus">SAK_0964</name>
</gene>
<comment type="function">
    <text evidence="1">Catalyzes the phosphorylation of the hydroxyl group of 4-methyl-5-beta-hydroxyethylthiazole (THZ).</text>
</comment>
<comment type="catalytic activity">
    <reaction evidence="1">
        <text>5-(2-hydroxyethyl)-4-methylthiazole + ATP = 4-methyl-5-(2-phosphooxyethyl)-thiazole + ADP + H(+)</text>
        <dbReference type="Rhea" id="RHEA:24212"/>
        <dbReference type="ChEBI" id="CHEBI:15378"/>
        <dbReference type="ChEBI" id="CHEBI:17957"/>
        <dbReference type="ChEBI" id="CHEBI:30616"/>
        <dbReference type="ChEBI" id="CHEBI:58296"/>
        <dbReference type="ChEBI" id="CHEBI:456216"/>
        <dbReference type="EC" id="2.7.1.50"/>
    </reaction>
</comment>
<comment type="cofactor">
    <cofactor evidence="1">
        <name>Mg(2+)</name>
        <dbReference type="ChEBI" id="CHEBI:18420"/>
    </cofactor>
</comment>
<comment type="pathway">
    <text evidence="1">Cofactor biosynthesis; thiamine diphosphate biosynthesis; 4-methyl-5-(2-phosphoethyl)-thiazole from 5-(2-hydroxyethyl)-4-methylthiazole: step 1/1.</text>
</comment>
<comment type="similarity">
    <text evidence="1">Belongs to the Thz kinase family.</text>
</comment>
<protein>
    <recommendedName>
        <fullName evidence="1">Hydroxyethylthiazole kinase</fullName>
        <ecNumber evidence="1">2.7.1.50</ecNumber>
    </recommendedName>
    <alternativeName>
        <fullName evidence="1">4-methyl-5-beta-hydroxyethylthiazole kinase</fullName>
        <shortName evidence="1">TH kinase</shortName>
        <shortName evidence="1">Thz kinase</shortName>
    </alternativeName>
</protein>
<feature type="chain" id="PRO_1000021537" description="Hydroxyethylthiazole kinase">
    <location>
        <begin position="1"/>
        <end position="256"/>
    </location>
</feature>
<feature type="binding site" evidence="1">
    <location>
        <position position="38"/>
    </location>
    <ligand>
        <name>substrate</name>
    </ligand>
</feature>
<feature type="binding site" evidence="1">
    <location>
        <position position="114"/>
    </location>
    <ligand>
        <name>ATP</name>
        <dbReference type="ChEBI" id="CHEBI:30616"/>
    </ligand>
</feature>
<feature type="binding site" evidence="1">
    <location>
        <position position="159"/>
    </location>
    <ligand>
        <name>ATP</name>
        <dbReference type="ChEBI" id="CHEBI:30616"/>
    </ligand>
</feature>
<feature type="binding site" evidence="1">
    <location>
        <position position="186"/>
    </location>
    <ligand>
        <name>substrate</name>
    </ligand>
</feature>
<evidence type="ECO:0000255" key="1">
    <source>
        <dbReference type="HAMAP-Rule" id="MF_00228"/>
    </source>
</evidence>
<name>THIM_STRA1</name>